<dbReference type="EMBL" id="AC002343">
    <property type="protein sequence ID" value="AAB63609.1"/>
    <property type="status" value="ALT_SEQ"/>
    <property type="molecule type" value="Genomic_DNA"/>
</dbReference>
<dbReference type="EMBL" id="AL109619">
    <property type="protein sequence ID" value="CAB51660.1"/>
    <property type="status" value="ALT_SEQ"/>
    <property type="molecule type" value="Genomic_DNA"/>
</dbReference>
<dbReference type="EMBL" id="AL161561">
    <property type="protein sequence ID" value="CAB79327.1"/>
    <property type="status" value="ALT_SEQ"/>
    <property type="molecule type" value="Genomic_DNA"/>
</dbReference>
<dbReference type="EMBL" id="CP002687">
    <property type="protein sequence ID" value="AEE84858.1"/>
    <property type="molecule type" value="Genomic_DNA"/>
</dbReference>
<dbReference type="EMBL" id="CP002687">
    <property type="protein sequence ID" value="ANM67734.1"/>
    <property type="molecule type" value="Genomic_DNA"/>
</dbReference>
<dbReference type="PIR" id="T13465">
    <property type="entry name" value="T13465"/>
</dbReference>
<dbReference type="RefSeq" id="NP_001320052.1">
    <property type="nucleotide sequence ID" value="NM_001341646.1"/>
</dbReference>
<dbReference type="RefSeq" id="NP_567695.1">
    <property type="nucleotide sequence ID" value="NM_118549.2"/>
</dbReference>
<dbReference type="SMR" id="F4JQ51"/>
<dbReference type="FunCoup" id="F4JQ51">
    <property type="interactions" value="92"/>
</dbReference>
<dbReference type="STRING" id="3702.F4JQ51"/>
<dbReference type="iPTMnet" id="F4JQ51"/>
<dbReference type="PaxDb" id="3702-AT4G24170.1"/>
<dbReference type="ProteomicsDB" id="237107"/>
<dbReference type="EnsemblPlants" id="AT4G24170.1">
    <property type="protein sequence ID" value="AT4G24170.1"/>
    <property type="gene ID" value="AT4G24170"/>
</dbReference>
<dbReference type="EnsemblPlants" id="AT4G24170.2">
    <property type="protein sequence ID" value="AT4G24170.2"/>
    <property type="gene ID" value="AT4G24170"/>
</dbReference>
<dbReference type="GeneID" id="828517"/>
<dbReference type="Gramene" id="AT4G24170.1">
    <property type="protein sequence ID" value="AT4G24170.1"/>
    <property type="gene ID" value="AT4G24170"/>
</dbReference>
<dbReference type="Gramene" id="AT4G24170.2">
    <property type="protein sequence ID" value="AT4G24170.2"/>
    <property type="gene ID" value="AT4G24170"/>
</dbReference>
<dbReference type="KEGG" id="ath:AT4G24170"/>
<dbReference type="Araport" id="AT4G24170"/>
<dbReference type="TAIR" id="AT4G24170"/>
<dbReference type="eggNOG" id="KOG0242">
    <property type="taxonomic scope" value="Eukaryota"/>
</dbReference>
<dbReference type="HOGENOM" id="CLU_013407_0_0_1"/>
<dbReference type="InParanoid" id="F4JQ51"/>
<dbReference type="OMA" id="EMGQRTI"/>
<dbReference type="OrthoDB" id="3176171at2759"/>
<dbReference type="PRO" id="PR:F4JQ51"/>
<dbReference type="Proteomes" id="UP000006548">
    <property type="component" value="Chromosome 4"/>
</dbReference>
<dbReference type="ExpressionAtlas" id="F4JQ51">
    <property type="expression patterns" value="baseline and differential"/>
</dbReference>
<dbReference type="GO" id="GO:0005874">
    <property type="term" value="C:microtubule"/>
    <property type="evidence" value="ECO:0007669"/>
    <property type="project" value="UniProtKB-KW"/>
</dbReference>
<dbReference type="GO" id="GO:0005524">
    <property type="term" value="F:ATP binding"/>
    <property type="evidence" value="ECO:0007669"/>
    <property type="project" value="UniProtKB-KW"/>
</dbReference>
<dbReference type="GO" id="GO:0008017">
    <property type="term" value="F:microtubule binding"/>
    <property type="evidence" value="ECO:0007669"/>
    <property type="project" value="InterPro"/>
</dbReference>
<dbReference type="GO" id="GO:0003777">
    <property type="term" value="F:microtubule motor activity"/>
    <property type="evidence" value="ECO:0007669"/>
    <property type="project" value="InterPro"/>
</dbReference>
<dbReference type="GO" id="GO:0007018">
    <property type="term" value="P:microtubule-based movement"/>
    <property type="evidence" value="ECO:0007669"/>
    <property type="project" value="InterPro"/>
</dbReference>
<dbReference type="CDD" id="cd01374">
    <property type="entry name" value="KISc_CENP_E"/>
    <property type="match status" value="1"/>
</dbReference>
<dbReference type="FunFam" id="3.40.850.10:FF:000016">
    <property type="entry name" value="Kinesin-like protein"/>
    <property type="match status" value="1"/>
</dbReference>
<dbReference type="Gene3D" id="3.40.850.10">
    <property type="entry name" value="Kinesin motor domain"/>
    <property type="match status" value="1"/>
</dbReference>
<dbReference type="InterPro" id="IPR027640">
    <property type="entry name" value="Kinesin-like_fam"/>
</dbReference>
<dbReference type="InterPro" id="IPR019821">
    <property type="entry name" value="Kinesin_motor_CS"/>
</dbReference>
<dbReference type="InterPro" id="IPR001752">
    <property type="entry name" value="Kinesin_motor_dom"/>
</dbReference>
<dbReference type="InterPro" id="IPR036961">
    <property type="entry name" value="Kinesin_motor_dom_sf"/>
</dbReference>
<dbReference type="InterPro" id="IPR021881">
    <property type="entry name" value="NACK_C"/>
</dbReference>
<dbReference type="InterPro" id="IPR027417">
    <property type="entry name" value="P-loop_NTPase"/>
</dbReference>
<dbReference type="PANTHER" id="PTHR47968">
    <property type="entry name" value="CENTROMERE PROTEIN E"/>
    <property type="match status" value="1"/>
</dbReference>
<dbReference type="PANTHER" id="PTHR47968:SF21">
    <property type="entry name" value="KINESIN-LIKE PROTEIN KIN-7I"/>
    <property type="match status" value="1"/>
</dbReference>
<dbReference type="Pfam" id="PF11995">
    <property type="entry name" value="DUF3490"/>
    <property type="match status" value="1"/>
</dbReference>
<dbReference type="Pfam" id="PF00225">
    <property type="entry name" value="Kinesin"/>
    <property type="match status" value="1"/>
</dbReference>
<dbReference type="PRINTS" id="PR00380">
    <property type="entry name" value="KINESINHEAVY"/>
</dbReference>
<dbReference type="SMART" id="SM00129">
    <property type="entry name" value="KISc"/>
    <property type="match status" value="1"/>
</dbReference>
<dbReference type="SUPFAM" id="SSF52540">
    <property type="entry name" value="P-loop containing nucleoside triphosphate hydrolases"/>
    <property type="match status" value="1"/>
</dbReference>
<dbReference type="PROSITE" id="PS00411">
    <property type="entry name" value="KINESIN_MOTOR_1"/>
    <property type="match status" value="1"/>
</dbReference>
<dbReference type="PROSITE" id="PS50067">
    <property type="entry name" value="KINESIN_MOTOR_2"/>
    <property type="match status" value="1"/>
</dbReference>
<organism>
    <name type="scientific">Arabidopsis thaliana</name>
    <name type="common">Mouse-ear cress</name>
    <dbReference type="NCBI Taxonomy" id="3702"/>
    <lineage>
        <taxon>Eukaryota</taxon>
        <taxon>Viridiplantae</taxon>
        <taxon>Streptophyta</taxon>
        <taxon>Embryophyta</taxon>
        <taxon>Tracheophyta</taxon>
        <taxon>Spermatophyta</taxon>
        <taxon>Magnoliopsida</taxon>
        <taxon>eudicotyledons</taxon>
        <taxon>Gunneridae</taxon>
        <taxon>Pentapetalae</taxon>
        <taxon>rosids</taxon>
        <taxon>malvids</taxon>
        <taxon>Brassicales</taxon>
        <taxon>Brassicaceae</taxon>
        <taxon>Camelineae</taxon>
        <taxon>Arabidopsis</taxon>
    </lineage>
</organism>
<evidence type="ECO:0000255" key="1"/>
<evidence type="ECO:0000255" key="2">
    <source>
        <dbReference type="PROSITE-ProRule" id="PRU00283"/>
    </source>
</evidence>
<evidence type="ECO:0000256" key="3">
    <source>
        <dbReference type="SAM" id="MobiDB-lite"/>
    </source>
</evidence>
<evidence type="ECO:0000303" key="4">
    <source>
    </source>
</evidence>
<evidence type="ECO:0000305" key="5"/>
<evidence type="ECO:0000312" key="6">
    <source>
        <dbReference type="Araport" id="AT4G24170"/>
    </source>
</evidence>
<evidence type="ECO:0000312" key="7">
    <source>
        <dbReference type="EMBL" id="AAB63609.1"/>
    </source>
</evidence>
<evidence type="ECO:0000312" key="8">
    <source>
        <dbReference type="EMBL" id="CAB51660.1"/>
    </source>
</evidence>
<evidence type="ECO:0007744" key="9">
    <source>
    </source>
</evidence>
<gene>
    <name evidence="5" type="primary">KIN7I</name>
    <name evidence="6" type="ordered locus">At4g24170</name>
    <name evidence="8" type="ORF">T19F6.1</name>
    <name evidence="7" type="ORF">T19F6.3</name>
</gene>
<reference key="1">
    <citation type="journal article" date="1999" name="Nature">
        <title>Sequence and analysis of chromosome 4 of the plant Arabidopsis thaliana.</title>
        <authorList>
            <person name="Mayer K.F.X."/>
            <person name="Schueller C."/>
            <person name="Wambutt R."/>
            <person name="Murphy G."/>
            <person name="Volckaert G."/>
            <person name="Pohl T."/>
            <person name="Duesterhoeft A."/>
            <person name="Stiekema W."/>
            <person name="Entian K.-D."/>
            <person name="Terryn N."/>
            <person name="Harris B."/>
            <person name="Ansorge W."/>
            <person name="Brandt P."/>
            <person name="Grivell L.A."/>
            <person name="Rieger M."/>
            <person name="Weichselgartner M."/>
            <person name="de Simone V."/>
            <person name="Obermaier B."/>
            <person name="Mache R."/>
            <person name="Mueller M."/>
            <person name="Kreis M."/>
            <person name="Delseny M."/>
            <person name="Puigdomenech P."/>
            <person name="Watson M."/>
            <person name="Schmidtheini T."/>
            <person name="Reichert B."/>
            <person name="Portetelle D."/>
            <person name="Perez-Alonso M."/>
            <person name="Boutry M."/>
            <person name="Bancroft I."/>
            <person name="Vos P."/>
            <person name="Hoheisel J."/>
            <person name="Zimmermann W."/>
            <person name="Wedler H."/>
            <person name="Ridley P."/>
            <person name="Langham S.-A."/>
            <person name="McCullagh B."/>
            <person name="Bilham L."/>
            <person name="Robben J."/>
            <person name="van der Schueren J."/>
            <person name="Grymonprez B."/>
            <person name="Chuang Y.-J."/>
            <person name="Vandenbussche F."/>
            <person name="Braeken M."/>
            <person name="Weltjens I."/>
            <person name="Voet M."/>
            <person name="Bastiaens I."/>
            <person name="Aert R."/>
            <person name="Defoor E."/>
            <person name="Weitzenegger T."/>
            <person name="Bothe G."/>
            <person name="Ramsperger U."/>
            <person name="Hilbert H."/>
            <person name="Braun M."/>
            <person name="Holzer E."/>
            <person name="Brandt A."/>
            <person name="Peters S."/>
            <person name="van Staveren M."/>
            <person name="Dirkse W."/>
            <person name="Mooijman P."/>
            <person name="Klein Lankhorst R."/>
            <person name="Rose M."/>
            <person name="Hauf J."/>
            <person name="Koetter P."/>
            <person name="Berneiser S."/>
            <person name="Hempel S."/>
            <person name="Feldpausch M."/>
            <person name="Lamberth S."/>
            <person name="Van den Daele H."/>
            <person name="De Keyser A."/>
            <person name="Buysshaert C."/>
            <person name="Gielen J."/>
            <person name="Villarroel R."/>
            <person name="De Clercq R."/>
            <person name="van Montagu M."/>
            <person name="Rogers J."/>
            <person name="Cronin A."/>
            <person name="Quail M.A."/>
            <person name="Bray-Allen S."/>
            <person name="Clark L."/>
            <person name="Doggett J."/>
            <person name="Hall S."/>
            <person name="Kay M."/>
            <person name="Lennard N."/>
            <person name="McLay K."/>
            <person name="Mayes R."/>
            <person name="Pettett A."/>
            <person name="Rajandream M.A."/>
            <person name="Lyne M."/>
            <person name="Benes V."/>
            <person name="Rechmann S."/>
            <person name="Borkova D."/>
            <person name="Bloecker H."/>
            <person name="Scharfe M."/>
            <person name="Grimm M."/>
            <person name="Loehnert T.-H."/>
            <person name="Dose S."/>
            <person name="de Haan M."/>
            <person name="Maarse A.C."/>
            <person name="Schaefer M."/>
            <person name="Mueller-Auer S."/>
            <person name="Gabel C."/>
            <person name="Fuchs M."/>
            <person name="Fartmann B."/>
            <person name="Granderath K."/>
            <person name="Dauner D."/>
            <person name="Herzl A."/>
            <person name="Neumann S."/>
            <person name="Argiriou A."/>
            <person name="Vitale D."/>
            <person name="Liguori R."/>
            <person name="Piravandi E."/>
            <person name="Massenet O."/>
            <person name="Quigley F."/>
            <person name="Clabauld G."/>
            <person name="Muendlein A."/>
            <person name="Felber R."/>
            <person name="Schnabl S."/>
            <person name="Hiller R."/>
            <person name="Schmidt W."/>
            <person name="Lecharny A."/>
            <person name="Aubourg S."/>
            <person name="Chefdor F."/>
            <person name="Cooke R."/>
            <person name="Berger C."/>
            <person name="Monfort A."/>
            <person name="Casacuberta E."/>
            <person name="Gibbons T."/>
            <person name="Weber N."/>
            <person name="Vandenbol M."/>
            <person name="Bargues M."/>
            <person name="Terol J."/>
            <person name="Torres A."/>
            <person name="Perez-Perez A."/>
            <person name="Purnelle B."/>
            <person name="Bent E."/>
            <person name="Johnson S."/>
            <person name="Tacon D."/>
            <person name="Jesse T."/>
            <person name="Heijnen L."/>
            <person name="Schwarz S."/>
            <person name="Scholler P."/>
            <person name="Heber S."/>
            <person name="Francs P."/>
            <person name="Bielke C."/>
            <person name="Frishman D."/>
            <person name="Haase D."/>
            <person name="Lemcke K."/>
            <person name="Mewes H.-W."/>
            <person name="Stocker S."/>
            <person name="Zaccaria P."/>
            <person name="Bevan M."/>
            <person name="Wilson R.K."/>
            <person name="de la Bastide M."/>
            <person name="Habermann K."/>
            <person name="Parnell L."/>
            <person name="Dedhia N."/>
            <person name="Gnoj L."/>
            <person name="Schutz K."/>
            <person name="Huang E."/>
            <person name="Spiegel L."/>
            <person name="Sekhon M."/>
            <person name="Murray J."/>
            <person name="Sheet P."/>
            <person name="Cordes M."/>
            <person name="Abu-Threideh J."/>
            <person name="Stoneking T."/>
            <person name="Kalicki J."/>
            <person name="Graves T."/>
            <person name="Harmon G."/>
            <person name="Edwards J."/>
            <person name="Latreille P."/>
            <person name="Courtney L."/>
            <person name="Cloud J."/>
            <person name="Abbott A."/>
            <person name="Scott K."/>
            <person name="Johnson D."/>
            <person name="Minx P."/>
            <person name="Bentley D."/>
            <person name="Fulton B."/>
            <person name="Miller N."/>
            <person name="Greco T."/>
            <person name="Kemp K."/>
            <person name="Kramer J."/>
            <person name="Fulton L."/>
            <person name="Mardis E."/>
            <person name="Dante M."/>
            <person name="Pepin K."/>
            <person name="Hillier L.W."/>
            <person name="Nelson J."/>
            <person name="Spieth J."/>
            <person name="Ryan E."/>
            <person name="Andrews S."/>
            <person name="Geisel C."/>
            <person name="Layman D."/>
            <person name="Du H."/>
            <person name="Ali J."/>
            <person name="Berghoff A."/>
            <person name="Jones K."/>
            <person name="Drone K."/>
            <person name="Cotton M."/>
            <person name="Joshu C."/>
            <person name="Antonoiu B."/>
            <person name="Zidanic M."/>
            <person name="Strong C."/>
            <person name="Sun H."/>
            <person name="Lamar B."/>
            <person name="Yordan C."/>
            <person name="Ma P."/>
            <person name="Zhong J."/>
            <person name="Preston R."/>
            <person name="Vil D."/>
            <person name="Shekher M."/>
            <person name="Matero A."/>
            <person name="Shah R."/>
            <person name="Swaby I.K."/>
            <person name="O'Shaughnessy A."/>
            <person name="Rodriguez M."/>
            <person name="Hoffman J."/>
            <person name="Till S."/>
            <person name="Granat S."/>
            <person name="Shohdy N."/>
            <person name="Hasegawa A."/>
            <person name="Hameed A."/>
            <person name="Lodhi M."/>
            <person name="Johnson A."/>
            <person name="Chen E."/>
            <person name="Marra M.A."/>
            <person name="Martienssen R."/>
            <person name="McCombie W.R."/>
        </authorList>
    </citation>
    <scope>NUCLEOTIDE SEQUENCE [LARGE SCALE GENOMIC DNA]</scope>
    <source>
        <strain>cv. Columbia</strain>
    </source>
</reference>
<reference key="2">
    <citation type="journal article" date="2017" name="Plant J.">
        <title>Araport11: a complete reannotation of the Arabidopsis thaliana reference genome.</title>
        <authorList>
            <person name="Cheng C.Y."/>
            <person name="Krishnakumar V."/>
            <person name="Chan A.P."/>
            <person name="Thibaud-Nissen F."/>
            <person name="Schobel S."/>
            <person name="Town C.D."/>
        </authorList>
    </citation>
    <scope>GENOME REANNOTATION</scope>
    <source>
        <strain>cv. Columbia</strain>
    </source>
</reference>
<reference key="3">
    <citation type="journal article" date="2001" name="BMC Genomics">
        <title>Kinesins in the Arabidopsis genome: a comparative analysis among eukaryotes.</title>
        <authorList>
            <person name="Reddy A.S."/>
            <person name="Day I.S."/>
        </authorList>
    </citation>
    <scope>GENE FAMILY</scope>
</reference>
<reference key="4">
    <citation type="journal article" date="2006" name="BMC Genomics">
        <title>Comprehensive comparative analysis of kinesins in photosynthetic eukaryotes.</title>
        <authorList>
            <person name="Richardson D.N."/>
            <person name="Simmons M.P."/>
            <person name="Reddy A.S."/>
        </authorList>
    </citation>
    <scope>GENE FAMILY</scope>
    <scope>NOMENCLATURE</scope>
</reference>
<reference key="5">
    <citation type="journal article" date="2007" name="Mol. Cell. Proteomics">
        <title>Multidimensional protein identification technology (MudPIT) analysis of ubiquitinated proteins in plants.</title>
        <authorList>
            <person name="Maor R."/>
            <person name="Jones A."/>
            <person name="Nuehse T.S."/>
            <person name="Studholme D.J."/>
            <person name="Peck S.C."/>
            <person name="Shirasu K."/>
        </authorList>
    </citation>
    <scope>UBIQUITINATION [LARGE SCALE ANALYSIS] AT LYS-881</scope>
    <scope>IDENTIFICATION BY MASS SPECTROMETRY [LARGE SCALE ANALYSIS]</scope>
    <source>
        <strain>cv. Landsberg erecta</strain>
    </source>
</reference>
<reference key="6">
    <citation type="journal article" date="2012" name="Protoplasma">
        <title>Functions of the Arabidopsis kinesin superfamily of microtubule-based motor proteins.</title>
        <authorList>
            <person name="Zhu C."/>
            <person name="Dixit R."/>
        </authorList>
    </citation>
    <scope>REVIEW</scope>
</reference>
<sequence length="1004" mass="114520">MGGEEKILVSVRVRPLNEKEKTRNDRCDWECINDTTIICKFHNLPDKSSYTFDKVFGFECPTKQVYDDGAKEVALCVLSGINSSIFAYGQTSSGKTYTMSGITEFAMDDIFAYIDKHKQERKFTLKFSAMEIYNEAVRDLLCEDSSTPLRLLDDPERGTVVEKLREETLRDRSHLEELLSICETQRKIGETSLNEISSRSHQILRLTIESSSQQFSPESSATLAASVCFVDLAGSERASQTLSAGSRLKEGCHINRSLLTLGTVIRKLSKGKNGHIPYRDSKLTRILQNSLGGNARTAIICTMSPARSHLEQSRNTLLFATCAKEVTTNAQVNLVVSEKALVKQLQRELARMENELKNLGPASASSTSDFYALMLKQKEELIAKMEEQIHELKWQRDVAQSRVENLLKSTAEERSSSSSMDSRRRRISYDSTDFDEPRMLNNLGKSNLYSPDEDGFLLDDTTPQFPGHNLHDKWEEMAQSTTQEPEDACKEVRCIEVNSGEAERVQIQDSLDDIVEKKEYEQNYESQKDDADSSIKNIDMELSLYTKPEAEDGVSVKKLIEDVQETEQSVEKQKQSPKKEEMEQYLSRDMSEQVTKSLPEEEQCVQEYGAYDKLEAQDVLTINKLEESQQTEQSVEKEDTKKNLSSKKEDLKQNLSMDQSEQLYKSPPEDEKCVEVYEGSDKDDNTYEALKKKVKEMQKTIEYFMSIQSAEEKQSPSFNIIDDTLSPGEYFKMRRSRSCRENLLFTKAAAAAASRGFIFETTNTSFDSDITVSMDAQSIKDSDTETSSSSFHEFMAGLRERTMQHHSTHSDDTDTKTMKPENTDDGGEKTEFERQQSQIIELWQVCNVPLVHRTYFFLLFKGDPSDFVYMEVELRRLSFLKDSTETSRKQTAKAVTREREWLAKQIPNKFGKKEKEEVYKKWGVELSSKRRSLQVTHKLWNNNTKDIEHCKESASLIATLVGFVDSTLTPKEMFGLSLTPTTFNIKPSSGWKFSNSFSRISFTG</sequence>
<name>KN7I_ARATH</name>
<proteinExistence type="evidence at protein level"/>
<protein>
    <recommendedName>
        <fullName evidence="5">Kinesin-like protein KIN-7I</fullName>
    </recommendedName>
</protein>
<feature type="chain" id="PRO_0000436467" description="Kinesin-like protein KIN-7I">
    <location>
        <begin position="1"/>
        <end position="1004"/>
    </location>
</feature>
<feature type="domain" description="Kinesin motor" evidence="2">
    <location>
        <begin position="6"/>
        <end position="326"/>
    </location>
</feature>
<feature type="region of interest" description="Disordered" evidence="3">
    <location>
        <begin position="567"/>
        <end position="599"/>
    </location>
</feature>
<feature type="region of interest" description="Disordered" evidence="3">
    <location>
        <begin position="628"/>
        <end position="671"/>
    </location>
</feature>
<feature type="region of interest" description="Disordered" evidence="3">
    <location>
        <begin position="802"/>
        <end position="830"/>
    </location>
</feature>
<feature type="coiled-coil region" evidence="1">
    <location>
        <begin position="335"/>
        <end position="402"/>
    </location>
</feature>
<feature type="coiled-coil region" evidence="1">
    <location>
        <begin position="517"/>
        <end position="576"/>
    </location>
</feature>
<feature type="coiled-coil region" evidence="1">
    <location>
        <begin position="634"/>
        <end position="661"/>
    </location>
</feature>
<feature type="compositionally biased region" description="Basic and acidic residues" evidence="3">
    <location>
        <begin position="569"/>
        <end position="582"/>
    </location>
</feature>
<feature type="compositionally biased region" description="Basic and acidic residues" evidence="3">
    <location>
        <begin position="634"/>
        <end position="652"/>
    </location>
</feature>
<feature type="compositionally biased region" description="Polar residues" evidence="3">
    <location>
        <begin position="653"/>
        <end position="663"/>
    </location>
</feature>
<feature type="binding site" evidence="2">
    <location>
        <begin position="89"/>
        <end position="96"/>
    </location>
    <ligand>
        <name>ATP</name>
        <dbReference type="ChEBI" id="CHEBI:30616"/>
    </ligand>
</feature>
<feature type="cross-link" description="Glycyl lysine isopeptide (Lys-Gly) (interchain with G-Cter in ubiquitin)" evidence="9">
    <location>
        <position position="881"/>
    </location>
</feature>
<keyword id="KW-0067">ATP-binding</keyword>
<keyword id="KW-0175">Coiled coil</keyword>
<keyword id="KW-1017">Isopeptide bond</keyword>
<keyword id="KW-0493">Microtubule</keyword>
<keyword id="KW-0505">Motor protein</keyword>
<keyword id="KW-0547">Nucleotide-binding</keyword>
<keyword id="KW-1185">Reference proteome</keyword>
<keyword id="KW-0832">Ubl conjugation</keyword>
<comment type="similarity">
    <text evidence="4">Belongs to the TRAFAC class myosin-kinesin ATPase superfamily. Kinesin family. KIN-7 subfamily.</text>
</comment>
<comment type="sequence caution" evidence="5">
    <conflict type="erroneous gene model prediction">
        <sequence resource="EMBL-CDS" id="AAB63609"/>
    </conflict>
</comment>
<comment type="sequence caution" evidence="5">
    <conflict type="erroneous gene model prediction">
        <sequence resource="EMBL-CDS" id="CAB51660"/>
    </conflict>
</comment>
<comment type="sequence caution" evidence="5">
    <conflict type="erroneous gene model prediction">
        <sequence resource="EMBL-CDS" id="CAB79327"/>
    </conflict>
</comment>
<accession>F4JQ51</accession>
<accession>O22974</accession>
<accession>Q9SU42</accession>